<comment type="function">
    <text evidence="8">S-layer protein. The S-layer is a paracrystalline mono-layered assembly of proteins which coats the surface of the cell.</text>
</comment>
<comment type="subcellular location">
    <subcellularLocation>
        <location evidence="5">Secreted</location>
        <location evidence="5">Cell wall</location>
        <location evidence="5">S-layer</location>
    </subcellularLocation>
    <subcellularLocation>
        <location evidence="7">Cell membrane</location>
    </subcellularLocation>
</comment>
<comment type="PTM">
    <text evidence="1">Glycosylated.</text>
</comment>
<comment type="PTM">
    <text evidence="1">Cleaved by the archaeosortase ArtA at the C-terminus, with removal of a short hydrophobic segment.</text>
</comment>
<comment type="PTM">
    <text evidence="1">Lipidation.</text>
</comment>
<comment type="similarity">
    <text evidence="7">Belongs to the halobacterial S-layer protein family.</text>
</comment>
<protein>
    <recommendedName>
        <fullName evidence="7">Cell surface glycoprotein</fullName>
    </recommendedName>
    <alternativeName>
        <fullName evidence="6">S-layer glycoprotein</fullName>
    </alternativeName>
</protein>
<reference key="1">
    <citation type="journal article" date="2015" name="J. Biotechnol.">
        <title>Complete genome sequence of Haloferax gibbonsii strain ARA6, a potential producer of polyhydroxyalkanoates and halocins isolated from Araruama, Rio de Janeiro, Brasil.</title>
        <authorList>
            <person name="Pinto L.H."/>
            <person name="D'Alincourt Carvalho-Assef A.P."/>
            <person name="Vieira R.P."/>
            <person name="Clementino M.M."/>
            <person name="Albano R.M."/>
        </authorList>
    </citation>
    <scope>NUCLEOTIDE SEQUENCE [LARGE SCALE GENOMIC DNA]</scope>
    <source>
        <strain>ARA6</strain>
    </source>
</reference>
<reference key="2">
    <citation type="journal article" date="2018" name="Genes (Basel)">
        <title>Comparative analysis of surface layer glycoproteins and genes involved in protein glycosylation in the genus Haloferax.</title>
        <authorList>
            <person name="Shalev Y."/>
            <person name="Soucy S.M."/>
            <person name="Papke R.T."/>
            <person name="Gogarten J.P."/>
            <person name="Eichler J."/>
            <person name="Gophna U."/>
        </authorList>
    </citation>
    <scope>IDENTIFICATION BY MASS SPECTROMETRY</scope>
    <scope>FUNCTION</scope>
    <scope>SUBCELLULAR LOCATION</scope>
</reference>
<dbReference type="EMBL" id="CP011947">
    <property type="protein sequence ID" value="AKU07018.1"/>
    <property type="molecule type" value="Genomic_DNA"/>
</dbReference>
<dbReference type="RefSeq" id="WP_050458809.1">
    <property type="nucleotide sequence ID" value="NZ_CP011947.1"/>
</dbReference>
<dbReference type="SMR" id="A0A0K1IRS6"/>
<dbReference type="GeneID" id="25245174"/>
<dbReference type="KEGG" id="hgi:ABY42_04395"/>
<dbReference type="PATRIC" id="fig|35746.4.peg.933"/>
<dbReference type="Proteomes" id="UP000066124">
    <property type="component" value="Chromosome"/>
</dbReference>
<dbReference type="GO" id="GO:0005576">
    <property type="term" value="C:extracellular region"/>
    <property type="evidence" value="ECO:0007669"/>
    <property type="project" value="UniProtKB-KW"/>
</dbReference>
<dbReference type="GO" id="GO:0005886">
    <property type="term" value="C:plasma membrane"/>
    <property type="evidence" value="ECO:0007669"/>
    <property type="project" value="UniProtKB-SubCell"/>
</dbReference>
<dbReference type="GO" id="GO:0030115">
    <property type="term" value="C:S-layer"/>
    <property type="evidence" value="ECO:0007669"/>
    <property type="project" value="UniProtKB-SubCell"/>
</dbReference>
<dbReference type="InterPro" id="IPR057149">
    <property type="entry name" value="DUF7827"/>
</dbReference>
<dbReference type="InterPro" id="IPR045474">
    <property type="entry name" value="GEVED"/>
</dbReference>
<dbReference type="InterPro" id="IPR026371">
    <property type="entry name" value="PGF_CTERM"/>
</dbReference>
<dbReference type="InterPro" id="IPR026452">
    <property type="entry name" value="Surf_glycop_sig_pep"/>
</dbReference>
<dbReference type="NCBIfam" id="TIGR04207">
    <property type="entry name" value="halo_sig_pep"/>
    <property type="match status" value="1"/>
</dbReference>
<dbReference type="NCBIfam" id="NF045517">
    <property type="entry name" value="halo_surf_dom"/>
    <property type="match status" value="1"/>
</dbReference>
<dbReference type="NCBIfam" id="TIGR04126">
    <property type="entry name" value="PGF_CTERM"/>
    <property type="match status" value="1"/>
</dbReference>
<dbReference type="NCBIfam" id="NF041335">
    <property type="entry name" value="surf_glcprot_Halo"/>
    <property type="match status" value="1"/>
</dbReference>
<dbReference type="Pfam" id="PF25162">
    <property type="entry name" value="DUF7827"/>
    <property type="match status" value="1"/>
</dbReference>
<dbReference type="Pfam" id="PF20009">
    <property type="entry name" value="GEVED"/>
    <property type="match status" value="1"/>
</dbReference>
<dbReference type="Pfam" id="PF18204">
    <property type="entry name" value="PGF-CTERM"/>
    <property type="match status" value="1"/>
</dbReference>
<name>CSG_HALGI</name>
<proteinExistence type="evidence at protein level"/>
<gene>
    <name evidence="9" type="ORF">ABY42_04395</name>
</gene>
<keyword id="KW-1003">Cell membrane</keyword>
<keyword id="KW-0134">Cell wall</keyword>
<keyword id="KW-0325">Glycoprotein</keyword>
<keyword id="KW-0472">Membrane</keyword>
<keyword id="KW-0701">S-layer</keyword>
<keyword id="KW-0964">Secreted</keyword>
<keyword id="KW-0732">Signal</keyword>
<keyword id="KW-0812">Transmembrane</keyword>
<keyword id="KW-1133">Transmembrane helix</keyword>
<organism>
    <name type="scientific">Haloferax gibbonsii</name>
    <dbReference type="NCBI Taxonomy" id="35746"/>
    <lineage>
        <taxon>Archaea</taxon>
        <taxon>Methanobacteriati</taxon>
        <taxon>Methanobacteriota</taxon>
        <taxon>Stenosarchaea group</taxon>
        <taxon>Halobacteria</taxon>
        <taxon>Halobacteriales</taxon>
        <taxon>Haloferacaceae</taxon>
        <taxon>Haloferax</taxon>
    </lineage>
</organism>
<feature type="signal peptide" evidence="2">
    <location>
        <begin position="1"/>
        <end position="22"/>
    </location>
</feature>
<feature type="chain" id="PRO_0000444353" description="Cell surface glycoprotein">
    <location>
        <begin position="23"/>
        <end status="unknown"/>
    </location>
</feature>
<feature type="propeptide" id="PRO_0000444354" description="Removed by archaeosortase" evidence="1">
    <location>
        <begin status="unknown"/>
        <end position="855"/>
    </location>
</feature>
<feature type="transmembrane region" description="Helical" evidence="2">
    <location>
        <begin position="831"/>
        <end position="851"/>
    </location>
</feature>
<feature type="region of interest" description="Disordered" evidence="4">
    <location>
        <begin position="782"/>
        <end position="831"/>
    </location>
</feature>
<feature type="short sequence motif" description="PGF sorting signal" evidence="1">
    <location>
        <begin position="832"/>
        <end position="834"/>
    </location>
</feature>
<feature type="compositionally biased region" description="Low complexity" evidence="4">
    <location>
        <begin position="782"/>
        <end position="802"/>
    </location>
</feature>
<feature type="compositionally biased region" description="Acidic residues" evidence="4">
    <location>
        <begin position="817"/>
        <end position="827"/>
    </location>
</feature>
<feature type="glycosylation site" description="N-linked (GlcNAc...) asparagine" evidence="3">
    <location>
        <position position="78"/>
    </location>
</feature>
<feature type="glycosylation site" description="N-linked (GlcNAc...) asparagine" evidence="3">
    <location>
        <position position="83"/>
    </location>
</feature>
<feature type="glycosylation site" description="N-linked (GlcNAc...) asparagine" evidence="3">
    <location>
        <position position="108"/>
    </location>
</feature>
<feature type="glycosylation site" description="N-linked (GlcNAc...) asparagine" evidence="3">
    <location>
        <position position="167"/>
    </location>
</feature>
<feature type="glycosylation site" description="N-linked (GlcNAc...) asparagine" evidence="3">
    <location>
        <position position="174"/>
    </location>
</feature>
<feature type="glycosylation site" description="N-linked (GlcNAc...) asparagine" evidence="3">
    <location>
        <position position="187"/>
    </location>
</feature>
<feature type="glycosylation site" description="N-linked (GlcNAc...) asparagine" evidence="3">
    <location>
        <position position="203"/>
    </location>
</feature>
<feature type="glycosylation site" description="N-linked (GlcNAc...) asparagine" evidence="3">
    <location>
        <position position="227"/>
    </location>
</feature>
<feature type="glycosylation site" description="N-linked (GlcNAc...) asparagine" evidence="3">
    <location>
        <position position="230"/>
    </location>
</feature>
<feature type="glycosylation site" description="N-linked (GlcNAc...) asparagine" evidence="3">
    <location>
        <position position="313"/>
    </location>
</feature>
<feature type="glycosylation site" description="N-linked (GlcNAc...) asparagine" evidence="3">
    <location>
        <position position="363"/>
    </location>
</feature>
<feature type="glycosylation site" description="N-linked (GlcNAc...) asparagine" evidence="3">
    <location>
        <position position="441"/>
    </location>
</feature>
<feature type="glycosylation site" description="N-linked (GlcNAc...) asparagine" evidence="3">
    <location>
        <position position="548"/>
    </location>
</feature>
<feature type="glycosylation site" description="N-linked (GlcNAc...) asparagine" evidence="3">
    <location>
        <position position="588"/>
    </location>
</feature>
<feature type="glycosylation site" description="N-linked (GlcNAc...) asparagine" evidence="3">
    <location>
        <position position="608"/>
    </location>
</feature>
<feature type="glycosylation site" description="N-linked (GlcNAc...) asparagine" evidence="3">
    <location>
        <position position="620"/>
    </location>
</feature>
<feature type="glycosylation site" description="N-linked (GlcNAc...) asparagine" evidence="3">
    <location>
        <position position="642"/>
    </location>
</feature>
<feature type="glycosylation site" description="N-linked (GlcNAc...) asparagine" evidence="3">
    <location>
        <position position="656"/>
    </location>
</feature>
<feature type="glycosylation site" description="N-linked (GlcNAc...) asparagine" evidence="3">
    <location>
        <position position="754"/>
    </location>
</feature>
<sequence>MTANKQVRAVLLAALMVFSVFAGSIAFTGTAAAAATSATVSPDTVDKGPSASVDVTVNSGGANDVHVWLDLNDDGYYNASEPNSTDTAAATATLSLSIPESVSAGEYNVSAAESASLTAGTTQQEAYDTLDVVAANPADFNSATHFDDGTPKVEVAFDEAVTVNEMNVTDGETNLSQSVSVSSGQVNVTLSQVYTDDLEVTYNVTDTSGNTATATEDVTFAPIYVANESNNTAYQGSNVAVVASAVDTDVEVEGADDDNNYQFSGSTGPNSQVFVFDTDGKTLDTYQFTVGGAQKAQVDVRDLGLELTVDDLNITTKDGIEGSVSANAGDRTVDIVALDDDGDEVEDTETTVTLNGQGEADFNLSSVDAGEYTIEATDAFTGVTLESDTVTVSKAKDSTGDFASSVINEQVGDVAEITVTLDGTDTGTVTIGDYSLGYSANVTVEDDNDDGEVVLLFNSYAPKKTSSFDVDDSDDEYTVEDITTDIPSGETLDAGDYDLEVATGGEADNVATLVLEDRSTDSVATWTAPTGADLTETEDVYDAIENENLTQTDSLANGDVVVTQVSATGLEGAFDASNFDALSGTQFNLTVEQTNPGPNRDAKVLGINSSSATIIADGDNDTYFIVYDLDDVSASRTDYYDNTSTLYEVEDDDAFNATFTVLEDGDLAEDDESASDEFEVVTPELELDQDEFAVGNAAEQSISGTATVAPGTELTIRVTSDGDTQPRFLKTASVYVQADGTFSSAFDFSEQNLNDTFEVTASVDSGTADDATADGIVGEAMETTTAAETTTTEESTETTTTEESTEEPTETATATEEPTEEATEETTESSTPGFGVVVALVALVAAALLAVRRDN</sequence>
<accession>A0A0K1IRS6</accession>
<evidence type="ECO:0000250" key="1">
    <source>
        <dbReference type="UniProtKB" id="P25062"/>
    </source>
</evidence>
<evidence type="ECO:0000255" key="2"/>
<evidence type="ECO:0000255" key="3">
    <source>
        <dbReference type="PROSITE-ProRule" id="PRU00498"/>
    </source>
</evidence>
<evidence type="ECO:0000256" key="4">
    <source>
        <dbReference type="SAM" id="MobiDB-lite"/>
    </source>
</evidence>
<evidence type="ECO:0000269" key="5">
    <source>
    </source>
</evidence>
<evidence type="ECO:0000303" key="6">
    <source>
    </source>
</evidence>
<evidence type="ECO:0000305" key="7"/>
<evidence type="ECO:0000305" key="8">
    <source>
    </source>
</evidence>
<evidence type="ECO:0000312" key="9">
    <source>
        <dbReference type="EMBL" id="AKU07018.1"/>
    </source>
</evidence>